<keyword id="KW-0067">ATP-binding</keyword>
<keyword id="KW-0436">Ligase</keyword>
<keyword id="KW-0547">Nucleotide-binding</keyword>
<keyword id="KW-0554">One-carbon metabolism</keyword>
<dbReference type="EC" id="6.3.4.3" evidence="1"/>
<dbReference type="EMBL" id="CP000419">
    <property type="protein sequence ID" value="ABJ66081.1"/>
    <property type="molecule type" value="Genomic_DNA"/>
</dbReference>
<dbReference type="RefSeq" id="WP_011681048.1">
    <property type="nucleotide sequence ID" value="NC_008532.1"/>
</dbReference>
<dbReference type="SMR" id="Q03L41"/>
<dbReference type="KEGG" id="ste:STER_0837"/>
<dbReference type="HOGENOM" id="CLU_003601_3_3_9"/>
<dbReference type="UniPathway" id="UPA00193"/>
<dbReference type="GO" id="GO:0005524">
    <property type="term" value="F:ATP binding"/>
    <property type="evidence" value="ECO:0007669"/>
    <property type="project" value="UniProtKB-UniRule"/>
</dbReference>
<dbReference type="GO" id="GO:0004329">
    <property type="term" value="F:formate-tetrahydrofolate ligase activity"/>
    <property type="evidence" value="ECO:0007669"/>
    <property type="project" value="UniProtKB-UniRule"/>
</dbReference>
<dbReference type="GO" id="GO:0035999">
    <property type="term" value="P:tetrahydrofolate interconversion"/>
    <property type="evidence" value="ECO:0007669"/>
    <property type="project" value="UniProtKB-UniRule"/>
</dbReference>
<dbReference type="CDD" id="cd00477">
    <property type="entry name" value="FTHFS"/>
    <property type="match status" value="1"/>
</dbReference>
<dbReference type="FunFam" id="3.30.1510.10:FF:000001">
    <property type="entry name" value="Formate--tetrahydrofolate ligase"/>
    <property type="match status" value="1"/>
</dbReference>
<dbReference type="FunFam" id="3.10.410.10:FF:000001">
    <property type="entry name" value="Putative formate--tetrahydrofolate ligase"/>
    <property type="match status" value="1"/>
</dbReference>
<dbReference type="Gene3D" id="3.30.1510.10">
    <property type="entry name" value="Domain 2, N(10)-formyltetrahydrofolate synthetase"/>
    <property type="match status" value="1"/>
</dbReference>
<dbReference type="Gene3D" id="3.10.410.10">
    <property type="entry name" value="Formyltetrahydrofolate synthetase, domain 3"/>
    <property type="match status" value="1"/>
</dbReference>
<dbReference type="Gene3D" id="3.40.50.300">
    <property type="entry name" value="P-loop containing nucleotide triphosphate hydrolases"/>
    <property type="match status" value="1"/>
</dbReference>
<dbReference type="HAMAP" id="MF_01543">
    <property type="entry name" value="FTHFS"/>
    <property type="match status" value="1"/>
</dbReference>
<dbReference type="InterPro" id="IPR000559">
    <property type="entry name" value="Formate_THF_ligase"/>
</dbReference>
<dbReference type="InterPro" id="IPR020628">
    <property type="entry name" value="Formate_THF_ligase_CS"/>
</dbReference>
<dbReference type="InterPro" id="IPR027417">
    <property type="entry name" value="P-loop_NTPase"/>
</dbReference>
<dbReference type="NCBIfam" id="NF010030">
    <property type="entry name" value="PRK13505.1"/>
    <property type="match status" value="1"/>
</dbReference>
<dbReference type="Pfam" id="PF01268">
    <property type="entry name" value="FTHFS"/>
    <property type="match status" value="1"/>
</dbReference>
<dbReference type="SUPFAM" id="SSF52540">
    <property type="entry name" value="P-loop containing nucleoside triphosphate hydrolases"/>
    <property type="match status" value="1"/>
</dbReference>
<dbReference type="PROSITE" id="PS00721">
    <property type="entry name" value="FTHFS_1"/>
    <property type="match status" value="1"/>
</dbReference>
<dbReference type="PROSITE" id="PS00722">
    <property type="entry name" value="FTHFS_2"/>
    <property type="match status" value="1"/>
</dbReference>
<organism>
    <name type="scientific">Streptococcus thermophilus (strain ATCC BAA-491 / LMD-9)</name>
    <dbReference type="NCBI Taxonomy" id="322159"/>
    <lineage>
        <taxon>Bacteria</taxon>
        <taxon>Bacillati</taxon>
        <taxon>Bacillota</taxon>
        <taxon>Bacilli</taxon>
        <taxon>Lactobacillales</taxon>
        <taxon>Streptococcaceae</taxon>
        <taxon>Streptococcus</taxon>
    </lineage>
</organism>
<accession>Q03L41</accession>
<sequence length="556" mass="59782">MKTDIEIAQSVELKPITEVVEKVGIGFDDLELYGKYKAKLSFDKINEVKDDKPGKLILVTAINPTPAGEGKSTMSIGLADALNKIGKKTMIALREPSLGPVMGIKGGAAGGGYAQVLPMEDINLHFTGDMHAITTANNALSALLDNHIHQGNALGIDQRRIIWKRVVDLNDRALRHVTVGLGGPLNGIPREDGFDITVASEIMAILCLATDINDLKERLANIVVAYRYDRTPVYVRDLEIEGALTLILKDAIKPNLVQTIYGTPALVHGGPFANIAHGCNSVLATSTALRLADYTVTEAGFGADLGAEKFLDIKTPNLPTTPDAVVIVATLRALKMHGGVAKTDLSEENVQAVRDGFSNLKRHVENIRKFGIPAVVAINEFVADTEAEIAALKELCSEIKVPVELASVWANGADGGIDLANTVVDVVENGNADYKRLYSDDDSLEEKITKIVTEIYGGKSVIFEKKAKNQLKQFAEFGWDKLPVCMAKTQYSFSDNQFLLGAPEGFDITIREFVPKTGAGFIVALTGDVMTMPGLPKAPAALKMDVTEDGTAVGLF</sequence>
<name>FTHS_STRTD</name>
<gene>
    <name evidence="1" type="primary">fhs</name>
    <name type="ordered locus">STER_0837</name>
</gene>
<feature type="chain" id="PRO_0000300550" description="Formate--tetrahydrofolate ligase">
    <location>
        <begin position="1"/>
        <end position="556"/>
    </location>
</feature>
<feature type="binding site" evidence="1">
    <location>
        <begin position="65"/>
        <end position="72"/>
    </location>
    <ligand>
        <name>ATP</name>
        <dbReference type="ChEBI" id="CHEBI:30616"/>
    </ligand>
</feature>
<proteinExistence type="inferred from homology"/>
<evidence type="ECO:0000255" key="1">
    <source>
        <dbReference type="HAMAP-Rule" id="MF_01543"/>
    </source>
</evidence>
<comment type="catalytic activity">
    <reaction evidence="1">
        <text>(6S)-5,6,7,8-tetrahydrofolate + formate + ATP = (6R)-10-formyltetrahydrofolate + ADP + phosphate</text>
        <dbReference type="Rhea" id="RHEA:20221"/>
        <dbReference type="ChEBI" id="CHEBI:15740"/>
        <dbReference type="ChEBI" id="CHEBI:30616"/>
        <dbReference type="ChEBI" id="CHEBI:43474"/>
        <dbReference type="ChEBI" id="CHEBI:57453"/>
        <dbReference type="ChEBI" id="CHEBI:195366"/>
        <dbReference type="ChEBI" id="CHEBI:456216"/>
        <dbReference type="EC" id="6.3.4.3"/>
    </reaction>
</comment>
<comment type="pathway">
    <text evidence="1">One-carbon metabolism; tetrahydrofolate interconversion.</text>
</comment>
<comment type="similarity">
    <text evidence="1">Belongs to the formate--tetrahydrofolate ligase family.</text>
</comment>
<reference key="1">
    <citation type="journal article" date="2006" name="Proc. Natl. Acad. Sci. U.S.A.">
        <title>Comparative genomics of the lactic acid bacteria.</title>
        <authorList>
            <person name="Makarova K.S."/>
            <person name="Slesarev A."/>
            <person name="Wolf Y.I."/>
            <person name="Sorokin A."/>
            <person name="Mirkin B."/>
            <person name="Koonin E.V."/>
            <person name="Pavlov A."/>
            <person name="Pavlova N."/>
            <person name="Karamychev V."/>
            <person name="Polouchine N."/>
            <person name="Shakhova V."/>
            <person name="Grigoriev I."/>
            <person name="Lou Y."/>
            <person name="Rohksar D."/>
            <person name="Lucas S."/>
            <person name="Huang K."/>
            <person name="Goodstein D.M."/>
            <person name="Hawkins T."/>
            <person name="Plengvidhya V."/>
            <person name="Welker D."/>
            <person name="Hughes J."/>
            <person name="Goh Y."/>
            <person name="Benson A."/>
            <person name="Baldwin K."/>
            <person name="Lee J.-H."/>
            <person name="Diaz-Muniz I."/>
            <person name="Dosti B."/>
            <person name="Smeianov V."/>
            <person name="Wechter W."/>
            <person name="Barabote R."/>
            <person name="Lorca G."/>
            <person name="Altermann E."/>
            <person name="Barrangou R."/>
            <person name="Ganesan B."/>
            <person name="Xie Y."/>
            <person name="Rawsthorne H."/>
            <person name="Tamir D."/>
            <person name="Parker C."/>
            <person name="Breidt F."/>
            <person name="Broadbent J.R."/>
            <person name="Hutkins R."/>
            <person name="O'Sullivan D."/>
            <person name="Steele J."/>
            <person name="Unlu G."/>
            <person name="Saier M.H. Jr."/>
            <person name="Klaenhammer T."/>
            <person name="Richardson P."/>
            <person name="Kozyavkin S."/>
            <person name="Weimer B.C."/>
            <person name="Mills D.A."/>
        </authorList>
    </citation>
    <scope>NUCLEOTIDE SEQUENCE [LARGE SCALE GENOMIC DNA]</scope>
    <source>
        <strain>ATCC BAA-491 / LMD-9</strain>
    </source>
</reference>
<protein>
    <recommendedName>
        <fullName evidence="1">Formate--tetrahydrofolate ligase</fullName>
        <ecNumber evidence="1">6.3.4.3</ecNumber>
    </recommendedName>
    <alternativeName>
        <fullName evidence="1">Formyltetrahydrofolate synthetase</fullName>
        <shortName evidence="1">FHS</shortName>
        <shortName evidence="1">FTHFS</shortName>
    </alternativeName>
</protein>